<protein>
    <recommendedName>
        <fullName evidence="1">Protein nucleotidyltransferase YdiU</fullName>
        <ecNumber evidence="1">2.7.7.-</ecNumber>
    </recommendedName>
    <alternativeName>
        <fullName evidence="1">Protein adenylyltransferase YdiU</fullName>
        <ecNumber evidence="1">2.7.7.108</ecNumber>
    </alternativeName>
    <alternativeName>
        <fullName evidence="1">Protein uridylyltransferase YdiU</fullName>
        <ecNumber evidence="1">2.7.7.-</ecNumber>
    </alternativeName>
</protein>
<comment type="function">
    <text evidence="1">Nucleotidyltransferase involved in the post-translational modification of proteins. It can catalyze the addition of adenosine monophosphate (AMP) or uridine monophosphate (UMP) to a protein, resulting in modifications known as AMPylation and UMPylation.</text>
</comment>
<comment type="catalytic activity">
    <reaction evidence="1">
        <text>L-seryl-[protein] + ATP = 3-O-(5'-adenylyl)-L-seryl-[protein] + diphosphate</text>
        <dbReference type="Rhea" id="RHEA:58120"/>
        <dbReference type="Rhea" id="RHEA-COMP:9863"/>
        <dbReference type="Rhea" id="RHEA-COMP:15073"/>
        <dbReference type="ChEBI" id="CHEBI:29999"/>
        <dbReference type="ChEBI" id="CHEBI:30616"/>
        <dbReference type="ChEBI" id="CHEBI:33019"/>
        <dbReference type="ChEBI" id="CHEBI:142516"/>
        <dbReference type="EC" id="2.7.7.108"/>
    </reaction>
</comment>
<comment type="catalytic activity">
    <reaction evidence="1">
        <text>L-threonyl-[protein] + ATP = 3-O-(5'-adenylyl)-L-threonyl-[protein] + diphosphate</text>
        <dbReference type="Rhea" id="RHEA:54292"/>
        <dbReference type="Rhea" id="RHEA-COMP:11060"/>
        <dbReference type="Rhea" id="RHEA-COMP:13847"/>
        <dbReference type="ChEBI" id="CHEBI:30013"/>
        <dbReference type="ChEBI" id="CHEBI:30616"/>
        <dbReference type="ChEBI" id="CHEBI:33019"/>
        <dbReference type="ChEBI" id="CHEBI:138113"/>
        <dbReference type="EC" id="2.7.7.108"/>
    </reaction>
</comment>
<comment type="catalytic activity">
    <reaction evidence="1">
        <text>L-tyrosyl-[protein] + ATP = O-(5'-adenylyl)-L-tyrosyl-[protein] + diphosphate</text>
        <dbReference type="Rhea" id="RHEA:54288"/>
        <dbReference type="Rhea" id="RHEA-COMP:10136"/>
        <dbReference type="Rhea" id="RHEA-COMP:13846"/>
        <dbReference type="ChEBI" id="CHEBI:30616"/>
        <dbReference type="ChEBI" id="CHEBI:33019"/>
        <dbReference type="ChEBI" id="CHEBI:46858"/>
        <dbReference type="ChEBI" id="CHEBI:83624"/>
        <dbReference type="EC" id="2.7.7.108"/>
    </reaction>
</comment>
<comment type="catalytic activity">
    <reaction evidence="1">
        <text>L-histidyl-[protein] + UTP = N(tele)-(5'-uridylyl)-L-histidyl-[protein] + diphosphate</text>
        <dbReference type="Rhea" id="RHEA:83891"/>
        <dbReference type="Rhea" id="RHEA-COMP:9745"/>
        <dbReference type="Rhea" id="RHEA-COMP:20239"/>
        <dbReference type="ChEBI" id="CHEBI:29979"/>
        <dbReference type="ChEBI" id="CHEBI:33019"/>
        <dbReference type="ChEBI" id="CHEBI:46398"/>
        <dbReference type="ChEBI" id="CHEBI:233474"/>
    </reaction>
</comment>
<comment type="catalytic activity">
    <reaction evidence="1">
        <text>L-seryl-[protein] + UTP = O-(5'-uridylyl)-L-seryl-[protein] + diphosphate</text>
        <dbReference type="Rhea" id="RHEA:64604"/>
        <dbReference type="Rhea" id="RHEA-COMP:9863"/>
        <dbReference type="Rhea" id="RHEA-COMP:16635"/>
        <dbReference type="ChEBI" id="CHEBI:29999"/>
        <dbReference type="ChEBI" id="CHEBI:33019"/>
        <dbReference type="ChEBI" id="CHEBI:46398"/>
        <dbReference type="ChEBI" id="CHEBI:156051"/>
    </reaction>
</comment>
<comment type="catalytic activity">
    <reaction evidence="1">
        <text>L-tyrosyl-[protein] + UTP = O-(5'-uridylyl)-L-tyrosyl-[protein] + diphosphate</text>
        <dbReference type="Rhea" id="RHEA:83887"/>
        <dbReference type="Rhea" id="RHEA-COMP:10136"/>
        <dbReference type="Rhea" id="RHEA-COMP:20238"/>
        <dbReference type="ChEBI" id="CHEBI:33019"/>
        <dbReference type="ChEBI" id="CHEBI:46398"/>
        <dbReference type="ChEBI" id="CHEBI:46858"/>
        <dbReference type="ChEBI" id="CHEBI:90602"/>
    </reaction>
</comment>
<comment type="cofactor">
    <cofactor evidence="1">
        <name>Mg(2+)</name>
        <dbReference type="ChEBI" id="CHEBI:18420"/>
    </cofactor>
    <cofactor evidence="1">
        <name>Mn(2+)</name>
        <dbReference type="ChEBI" id="CHEBI:29035"/>
    </cofactor>
</comment>
<comment type="similarity">
    <text evidence="1">Belongs to the SELO family.</text>
</comment>
<organism>
    <name type="scientific">Rhodopseudomonas palustris (strain HaA2)</name>
    <dbReference type="NCBI Taxonomy" id="316058"/>
    <lineage>
        <taxon>Bacteria</taxon>
        <taxon>Pseudomonadati</taxon>
        <taxon>Pseudomonadota</taxon>
        <taxon>Alphaproteobacteria</taxon>
        <taxon>Hyphomicrobiales</taxon>
        <taxon>Nitrobacteraceae</taxon>
        <taxon>Rhodopseudomonas</taxon>
    </lineage>
</organism>
<sequence length="492" mass="53924">MTVHFPFDNSYAALPENFFARVAPTPVAAPRLIKLNRPLAQRLGLDPDRLDSPEGAEILAGTRVPEGAASIAMAYAGHQFGNFVPQLGDGRAILLGEVIDRDGVRRDIQLKGSGRTPFSRMGDGRAALGPVLREYIVSEAMAALGVPTTRSLAAVLTGERVLRDPIQPGAVLTRIASSHIRVGTFQFFASRGDRDAVRALADHVIARHYPEAAEADSPYLALLEGVIARQADLIARWMMIGFIHGVMNTDNTSIAGETIDYGPCAYMDTFDPKTVFSSIDHMGRYAFGNQPPIALWNLTRLAECLVPLLSDDDDKGVEIAQRALGGFADRFNAAYLAGLAAKLGLATTQPEDTQLAQDFLAAMAKGRADFTLAFRRLSDAAIDPVDLGAVRALFDDPTAFDEWAPRWRSRISLEEQNNTARQTEMREVNPIYIPRNHRVEAVIRAAVDHDDFAPFEEILAVLSNPFREQAKFARYAEPPQLHERVLETFCGT</sequence>
<accession>Q2IX60</accession>
<dbReference type="EC" id="2.7.7.-" evidence="1"/>
<dbReference type="EC" id="2.7.7.108" evidence="1"/>
<dbReference type="EMBL" id="CP000250">
    <property type="protein sequence ID" value="ABD07200.1"/>
    <property type="molecule type" value="Genomic_DNA"/>
</dbReference>
<dbReference type="RefSeq" id="WP_011441385.1">
    <property type="nucleotide sequence ID" value="NC_007778.1"/>
</dbReference>
<dbReference type="SMR" id="Q2IX60"/>
<dbReference type="STRING" id="316058.RPB_2495"/>
<dbReference type="KEGG" id="rpb:RPB_2495"/>
<dbReference type="eggNOG" id="COG0397">
    <property type="taxonomic scope" value="Bacteria"/>
</dbReference>
<dbReference type="HOGENOM" id="CLU_010245_4_0_5"/>
<dbReference type="OrthoDB" id="9776281at2"/>
<dbReference type="Proteomes" id="UP000008809">
    <property type="component" value="Chromosome"/>
</dbReference>
<dbReference type="GO" id="GO:0070733">
    <property type="term" value="F:AMPylase activity"/>
    <property type="evidence" value="ECO:0007669"/>
    <property type="project" value="RHEA"/>
</dbReference>
<dbReference type="GO" id="GO:0005524">
    <property type="term" value="F:ATP binding"/>
    <property type="evidence" value="ECO:0007669"/>
    <property type="project" value="UniProtKB-UniRule"/>
</dbReference>
<dbReference type="GO" id="GO:0000287">
    <property type="term" value="F:magnesium ion binding"/>
    <property type="evidence" value="ECO:0007669"/>
    <property type="project" value="UniProtKB-UniRule"/>
</dbReference>
<dbReference type="HAMAP" id="MF_00692">
    <property type="entry name" value="YdiU_SelO"/>
    <property type="match status" value="1"/>
</dbReference>
<dbReference type="InterPro" id="IPR003846">
    <property type="entry name" value="SelO"/>
</dbReference>
<dbReference type="NCBIfam" id="NF000658">
    <property type="entry name" value="PRK00029.1"/>
    <property type="match status" value="1"/>
</dbReference>
<dbReference type="PANTHER" id="PTHR32057">
    <property type="entry name" value="PROTEIN ADENYLYLTRANSFERASE SELO, MITOCHONDRIAL"/>
    <property type="match status" value="1"/>
</dbReference>
<dbReference type="PANTHER" id="PTHR32057:SF14">
    <property type="entry name" value="PROTEIN ADENYLYLTRANSFERASE SELO, MITOCHONDRIAL"/>
    <property type="match status" value="1"/>
</dbReference>
<dbReference type="Pfam" id="PF02696">
    <property type="entry name" value="SelO"/>
    <property type="match status" value="1"/>
</dbReference>
<keyword id="KW-0067">ATP-binding</keyword>
<keyword id="KW-0460">Magnesium</keyword>
<keyword id="KW-0464">Manganese</keyword>
<keyword id="KW-0479">Metal-binding</keyword>
<keyword id="KW-0547">Nucleotide-binding</keyword>
<keyword id="KW-0548">Nucleotidyltransferase</keyword>
<keyword id="KW-1185">Reference proteome</keyword>
<keyword id="KW-0808">Transferase</keyword>
<feature type="chain" id="PRO_0000271860" description="Protein nucleotidyltransferase YdiU">
    <location>
        <begin position="1"/>
        <end position="492"/>
    </location>
</feature>
<feature type="active site" description="Proton acceptor" evidence="1">
    <location>
        <position position="250"/>
    </location>
</feature>
<feature type="binding site" evidence="1">
    <location>
        <position position="88"/>
    </location>
    <ligand>
        <name>ATP</name>
        <dbReference type="ChEBI" id="CHEBI:30616"/>
    </ligand>
</feature>
<feature type="binding site" evidence="1">
    <location>
        <position position="90"/>
    </location>
    <ligand>
        <name>ATP</name>
        <dbReference type="ChEBI" id="CHEBI:30616"/>
    </ligand>
</feature>
<feature type="binding site" evidence="1">
    <location>
        <position position="91"/>
    </location>
    <ligand>
        <name>ATP</name>
        <dbReference type="ChEBI" id="CHEBI:30616"/>
    </ligand>
</feature>
<feature type="binding site" evidence="1">
    <location>
        <position position="111"/>
    </location>
    <ligand>
        <name>ATP</name>
        <dbReference type="ChEBI" id="CHEBI:30616"/>
    </ligand>
</feature>
<feature type="binding site" evidence="1">
    <location>
        <position position="123"/>
    </location>
    <ligand>
        <name>ATP</name>
        <dbReference type="ChEBI" id="CHEBI:30616"/>
    </ligand>
</feature>
<feature type="binding site" evidence="1">
    <location>
        <position position="124"/>
    </location>
    <ligand>
        <name>ATP</name>
        <dbReference type="ChEBI" id="CHEBI:30616"/>
    </ligand>
</feature>
<feature type="binding site" evidence="1">
    <location>
        <position position="174"/>
    </location>
    <ligand>
        <name>ATP</name>
        <dbReference type="ChEBI" id="CHEBI:30616"/>
    </ligand>
</feature>
<feature type="binding site" evidence="1">
    <location>
        <position position="181"/>
    </location>
    <ligand>
        <name>ATP</name>
        <dbReference type="ChEBI" id="CHEBI:30616"/>
    </ligand>
</feature>
<feature type="binding site" evidence="1">
    <location>
        <position position="251"/>
    </location>
    <ligand>
        <name>Mg(2+)</name>
        <dbReference type="ChEBI" id="CHEBI:18420"/>
    </ligand>
</feature>
<feature type="binding site" evidence="1">
    <location>
        <position position="260"/>
    </location>
    <ligand>
        <name>ATP</name>
        <dbReference type="ChEBI" id="CHEBI:30616"/>
    </ligand>
</feature>
<feature type="binding site" evidence="1">
    <location>
        <position position="260"/>
    </location>
    <ligand>
        <name>Mg(2+)</name>
        <dbReference type="ChEBI" id="CHEBI:18420"/>
    </ligand>
</feature>
<evidence type="ECO:0000255" key="1">
    <source>
        <dbReference type="HAMAP-Rule" id="MF_00692"/>
    </source>
</evidence>
<proteinExistence type="inferred from homology"/>
<name>SELO_RHOP2</name>
<gene>
    <name evidence="1" type="primary">ydiU</name>
    <name evidence="1" type="synonym">selO</name>
    <name type="ordered locus">RPB_2495</name>
</gene>
<reference key="1">
    <citation type="submission" date="2006-01" db="EMBL/GenBank/DDBJ databases">
        <title>Complete sequence of Rhodopseudomonas palustris HaA2.</title>
        <authorList>
            <consortium name="US DOE Joint Genome Institute"/>
            <person name="Copeland A."/>
            <person name="Lucas S."/>
            <person name="Lapidus A."/>
            <person name="Barry K."/>
            <person name="Detter J.C."/>
            <person name="Glavina T."/>
            <person name="Hammon N."/>
            <person name="Israni S."/>
            <person name="Pitluck S."/>
            <person name="Chain P."/>
            <person name="Malfatti S."/>
            <person name="Shin M."/>
            <person name="Vergez L."/>
            <person name="Schmutz J."/>
            <person name="Larimer F."/>
            <person name="Land M."/>
            <person name="Hauser L."/>
            <person name="Pelletier D.A."/>
            <person name="Kyrpides N."/>
            <person name="Anderson I."/>
            <person name="Oda Y."/>
            <person name="Harwood C.S."/>
            <person name="Richardson P."/>
        </authorList>
    </citation>
    <scope>NUCLEOTIDE SEQUENCE [LARGE SCALE GENOMIC DNA]</scope>
    <source>
        <strain>HaA2</strain>
    </source>
</reference>